<proteinExistence type="inferred from homology"/>
<organism>
    <name type="scientific">Chlamydia felis (strain Fe/C-56)</name>
    <name type="common">Chlamydophila felis</name>
    <dbReference type="NCBI Taxonomy" id="264202"/>
    <lineage>
        <taxon>Bacteria</taxon>
        <taxon>Pseudomonadati</taxon>
        <taxon>Chlamydiota</taxon>
        <taxon>Chlamydiia</taxon>
        <taxon>Chlamydiales</taxon>
        <taxon>Chlamydiaceae</taxon>
        <taxon>Chlamydia/Chlamydophila group</taxon>
        <taxon>Chlamydia</taxon>
    </lineage>
</organism>
<comment type="function">
    <text evidence="1">This protein binds to the 23S rRNA, and is important in its secondary structure. It is located near the subunit interface in the base of the L7/L12 stalk, and near the tRNA binding site of the peptidyltransferase center.</text>
</comment>
<comment type="subunit">
    <text evidence="1">Part of the 50S ribosomal subunit.</text>
</comment>
<comment type="similarity">
    <text evidence="1">Belongs to the universal ribosomal protein uL6 family.</text>
</comment>
<feature type="chain" id="PRO_0000265242" description="Large ribosomal subunit protein uL6">
    <location>
        <begin position="1"/>
        <end position="183"/>
    </location>
</feature>
<evidence type="ECO:0000255" key="1">
    <source>
        <dbReference type="HAMAP-Rule" id="MF_01365"/>
    </source>
</evidence>
<evidence type="ECO:0000305" key="2"/>
<dbReference type="EMBL" id="AP006861">
    <property type="protein sequence ID" value="BAE81671.1"/>
    <property type="molecule type" value="Genomic_DNA"/>
</dbReference>
<dbReference type="RefSeq" id="WP_011458445.1">
    <property type="nucleotide sequence ID" value="NC_007899.1"/>
</dbReference>
<dbReference type="SMR" id="Q252W7"/>
<dbReference type="STRING" id="264202.CF0899"/>
<dbReference type="KEGG" id="cfe:CF0899"/>
<dbReference type="eggNOG" id="COG0097">
    <property type="taxonomic scope" value="Bacteria"/>
</dbReference>
<dbReference type="HOGENOM" id="CLU_065464_1_2_0"/>
<dbReference type="OrthoDB" id="9805007at2"/>
<dbReference type="Proteomes" id="UP000001260">
    <property type="component" value="Chromosome"/>
</dbReference>
<dbReference type="GO" id="GO:0022625">
    <property type="term" value="C:cytosolic large ribosomal subunit"/>
    <property type="evidence" value="ECO:0007669"/>
    <property type="project" value="TreeGrafter"/>
</dbReference>
<dbReference type="GO" id="GO:0019843">
    <property type="term" value="F:rRNA binding"/>
    <property type="evidence" value="ECO:0007669"/>
    <property type="project" value="UniProtKB-UniRule"/>
</dbReference>
<dbReference type="GO" id="GO:0003735">
    <property type="term" value="F:structural constituent of ribosome"/>
    <property type="evidence" value="ECO:0007669"/>
    <property type="project" value="InterPro"/>
</dbReference>
<dbReference type="GO" id="GO:0002181">
    <property type="term" value="P:cytoplasmic translation"/>
    <property type="evidence" value="ECO:0007669"/>
    <property type="project" value="TreeGrafter"/>
</dbReference>
<dbReference type="FunFam" id="3.90.930.12:FF:000001">
    <property type="entry name" value="50S ribosomal protein L6"/>
    <property type="match status" value="1"/>
</dbReference>
<dbReference type="Gene3D" id="3.90.930.12">
    <property type="entry name" value="Ribosomal protein L6, alpha-beta domain"/>
    <property type="match status" value="2"/>
</dbReference>
<dbReference type="HAMAP" id="MF_01365_B">
    <property type="entry name" value="Ribosomal_uL6_B"/>
    <property type="match status" value="1"/>
</dbReference>
<dbReference type="InterPro" id="IPR000702">
    <property type="entry name" value="Ribosomal_uL6-like"/>
</dbReference>
<dbReference type="InterPro" id="IPR036789">
    <property type="entry name" value="Ribosomal_uL6-like_a/b-dom_sf"/>
</dbReference>
<dbReference type="InterPro" id="IPR020040">
    <property type="entry name" value="Ribosomal_uL6_a/b-dom"/>
</dbReference>
<dbReference type="InterPro" id="IPR019906">
    <property type="entry name" value="Ribosomal_uL6_bac-type"/>
</dbReference>
<dbReference type="InterPro" id="IPR002358">
    <property type="entry name" value="Ribosomal_uL6_CS"/>
</dbReference>
<dbReference type="NCBIfam" id="TIGR03654">
    <property type="entry name" value="L6_bact"/>
    <property type="match status" value="1"/>
</dbReference>
<dbReference type="PANTHER" id="PTHR11655">
    <property type="entry name" value="60S/50S RIBOSOMAL PROTEIN L6/L9"/>
    <property type="match status" value="1"/>
</dbReference>
<dbReference type="PANTHER" id="PTHR11655:SF14">
    <property type="entry name" value="LARGE RIBOSOMAL SUBUNIT PROTEIN UL6M"/>
    <property type="match status" value="1"/>
</dbReference>
<dbReference type="Pfam" id="PF00347">
    <property type="entry name" value="Ribosomal_L6"/>
    <property type="match status" value="2"/>
</dbReference>
<dbReference type="PIRSF" id="PIRSF002162">
    <property type="entry name" value="Ribosomal_L6"/>
    <property type="match status" value="1"/>
</dbReference>
<dbReference type="PRINTS" id="PR00059">
    <property type="entry name" value="RIBOSOMALL6"/>
</dbReference>
<dbReference type="SUPFAM" id="SSF56053">
    <property type="entry name" value="Ribosomal protein L6"/>
    <property type="match status" value="2"/>
</dbReference>
<dbReference type="PROSITE" id="PS00525">
    <property type="entry name" value="RIBOSOMAL_L6_1"/>
    <property type="match status" value="1"/>
</dbReference>
<gene>
    <name evidence="1" type="primary">rplF</name>
    <name type="ordered locus">CF0899</name>
</gene>
<protein>
    <recommendedName>
        <fullName evidence="1">Large ribosomal subunit protein uL6</fullName>
    </recommendedName>
    <alternativeName>
        <fullName evidence="2">50S ribosomal protein L6</fullName>
    </alternativeName>
</protein>
<name>RL6_CHLFF</name>
<reference key="1">
    <citation type="journal article" date="2006" name="DNA Res.">
        <title>Genome sequence of the cat pathogen, Chlamydophila felis.</title>
        <authorList>
            <person name="Azuma Y."/>
            <person name="Hirakawa H."/>
            <person name="Yamashita A."/>
            <person name="Cai Y."/>
            <person name="Rahman M.A."/>
            <person name="Suzuki H."/>
            <person name="Mitaku S."/>
            <person name="Toh H."/>
            <person name="Goto S."/>
            <person name="Murakami T."/>
            <person name="Sugi K."/>
            <person name="Hayashi H."/>
            <person name="Fukushi H."/>
            <person name="Hattori M."/>
            <person name="Kuhara S."/>
            <person name="Shirai M."/>
        </authorList>
    </citation>
    <scope>NUCLEOTIDE SEQUENCE [LARGE SCALE GENOMIC DNA]</scope>
    <source>
        <strain>Fe/C-56</strain>
    </source>
</reference>
<keyword id="KW-0687">Ribonucleoprotein</keyword>
<keyword id="KW-0689">Ribosomal protein</keyword>
<keyword id="KW-0694">RNA-binding</keyword>
<keyword id="KW-0699">rRNA-binding</keyword>
<sequence length="183" mass="19937">MSRKARDPIVLPQGVEVSLQNNEIVVKGPKGSLTQTLAPEVVVEIKDKEVFVSPAPNVVDRPSRVQGLFWALISNMVQGVSAGFEKRLEMIGVGFRAAVQGSVLDLSIGVSHPTKIPIPADIQVTVEKNTLISVKGINKQLVGEFAANIRAKRRPEPYKGKGIRYENEYVRRKAGKAAKTGKK</sequence>
<accession>Q252W7</accession>